<protein>
    <recommendedName>
        <fullName evidence="1">4-hydroxythreonine-4-phosphate dehydrogenase</fullName>
        <ecNumber evidence="1">1.1.1.262</ecNumber>
    </recommendedName>
    <alternativeName>
        <fullName evidence="1">4-(phosphohydroxy)-L-threonine dehydrogenase</fullName>
    </alternativeName>
</protein>
<keyword id="KW-0170">Cobalt</keyword>
<keyword id="KW-0963">Cytoplasm</keyword>
<keyword id="KW-0460">Magnesium</keyword>
<keyword id="KW-0479">Metal-binding</keyword>
<keyword id="KW-0520">NAD</keyword>
<keyword id="KW-0521">NADP</keyword>
<keyword id="KW-0560">Oxidoreductase</keyword>
<keyword id="KW-0664">Pyridoxine biosynthesis</keyword>
<keyword id="KW-0862">Zinc</keyword>
<sequence length="326" mass="34947">MTQRIAITPGEPAGVGPDLIITIAQQDWPVEMVVIASKALLQERSKALSLPLTIIDYDQHAPAKSQKSGSLTVLDVELTEPCVPGTLNSANGSYVVETLRIASEKNISGEFDAIVTGPVHKGLINKAGIAFSGHTEYFATQANCSDVVMMLATKGLRVALVTTHIPLAYVSKAITYERLQKVTRILHKDLQEKFGIKSPKIYACGINPHAGEDGHLGREEIEIMEPAFAELRADGIDIIGPLPADTIFQEKYLAEADAILAMYHDQGLPVLKYKGFGSSVNITLGLPFIRTSVDHGTALELAGKGTADSGSFIEAMNNAINLASNK</sequence>
<dbReference type="EC" id="1.1.1.262" evidence="1"/>
<dbReference type="EMBL" id="CP000083">
    <property type="protein sequence ID" value="AAZ28186.1"/>
    <property type="molecule type" value="Genomic_DNA"/>
</dbReference>
<dbReference type="RefSeq" id="WP_011045254.1">
    <property type="nucleotide sequence ID" value="NC_003910.7"/>
</dbReference>
<dbReference type="SMR" id="Q47VJ9"/>
<dbReference type="STRING" id="167879.CPS_4525"/>
<dbReference type="KEGG" id="cps:CPS_4525"/>
<dbReference type="eggNOG" id="COG1995">
    <property type="taxonomic scope" value="Bacteria"/>
</dbReference>
<dbReference type="HOGENOM" id="CLU_040168_1_0_6"/>
<dbReference type="UniPathway" id="UPA00244">
    <property type="reaction ID" value="UER00312"/>
</dbReference>
<dbReference type="Proteomes" id="UP000000547">
    <property type="component" value="Chromosome"/>
</dbReference>
<dbReference type="GO" id="GO:0005737">
    <property type="term" value="C:cytoplasm"/>
    <property type="evidence" value="ECO:0007669"/>
    <property type="project" value="UniProtKB-SubCell"/>
</dbReference>
<dbReference type="GO" id="GO:0050570">
    <property type="term" value="F:4-hydroxythreonine-4-phosphate dehydrogenase activity"/>
    <property type="evidence" value="ECO:0007669"/>
    <property type="project" value="UniProtKB-UniRule"/>
</dbReference>
<dbReference type="GO" id="GO:0050897">
    <property type="term" value="F:cobalt ion binding"/>
    <property type="evidence" value="ECO:0007669"/>
    <property type="project" value="UniProtKB-UniRule"/>
</dbReference>
<dbReference type="GO" id="GO:0000287">
    <property type="term" value="F:magnesium ion binding"/>
    <property type="evidence" value="ECO:0007669"/>
    <property type="project" value="UniProtKB-UniRule"/>
</dbReference>
<dbReference type="GO" id="GO:0051287">
    <property type="term" value="F:NAD binding"/>
    <property type="evidence" value="ECO:0007669"/>
    <property type="project" value="InterPro"/>
</dbReference>
<dbReference type="GO" id="GO:0008270">
    <property type="term" value="F:zinc ion binding"/>
    <property type="evidence" value="ECO:0007669"/>
    <property type="project" value="UniProtKB-UniRule"/>
</dbReference>
<dbReference type="GO" id="GO:0042823">
    <property type="term" value="P:pyridoxal phosphate biosynthetic process"/>
    <property type="evidence" value="ECO:0007669"/>
    <property type="project" value="UniProtKB-UniRule"/>
</dbReference>
<dbReference type="GO" id="GO:0008615">
    <property type="term" value="P:pyridoxine biosynthetic process"/>
    <property type="evidence" value="ECO:0007669"/>
    <property type="project" value="UniProtKB-UniRule"/>
</dbReference>
<dbReference type="Gene3D" id="3.40.718.10">
    <property type="entry name" value="Isopropylmalate Dehydrogenase"/>
    <property type="match status" value="1"/>
</dbReference>
<dbReference type="HAMAP" id="MF_00536">
    <property type="entry name" value="PdxA"/>
    <property type="match status" value="1"/>
</dbReference>
<dbReference type="InterPro" id="IPR037510">
    <property type="entry name" value="PdxA"/>
</dbReference>
<dbReference type="InterPro" id="IPR005255">
    <property type="entry name" value="PdxA_fam"/>
</dbReference>
<dbReference type="NCBIfam" id="TIGR00557">
    <property type="entry name" value="pdxA"/>
    <property type="match status" value="1"/>
</dbReference>
<dbReference type="PANTHER" id="PTHR30004">
    <property type="entry name" value="4-HYDROXYTHREONINE-4-PHOSPHATE DEHYDROGENASE"/>
    <property type="match status" value="1"/>
</dbReference>
<dbReference type="PANTHER" id="PTHR30004:SF5">
    <property type="entry name" value="4-HYDROXYTHREONINE-4-PHOSPHATE DEHYDROGENASE"/>
    <property type="match status" value="1"/>
</dbReference>
<dbReference type="Pfam" id="PF04166">
    <property type="entry name" value="PdxA"/>
    <property type="match status" value="1"/>
</dbReference>
<dbReference type="SUPFAM" id="SSF53659">
    <property type="entry name" value="Isocitrate/Isopropylmalate dehydrogenase-like"/>
    <property type="match status" value="1"/>
</dbReference>
<comment type="function">
    <text evidence="1">Catalyzes the NAD(P)-dependent oxidation of 4-(phosphooxy)-L-threonine (HTP) into 2-amino-3-oxo-4-(phosphooxy)butyric acid which spontaneously decarboxylates to form 3-amino-2-oxopropyl phosphate (AHAP).</text>
</comment>
<comment type="catalytic activity">
    <reaction evidence="1">
        <text>4-(phosphooxy)-L-threonine + NAD(+) = 3-amino-2-oxopropyl phosphate + CO2 + NADH</text>
        <dbReference type="Rhea" id="RHEA:32275"/>
        <dbReference type="ChEBI" id="CHEBI:16526"/>
        <dbReference type="ChEBI" id="CHEBI:57279"/>
        <dbReference type="ChEBI" id="CHEBI:57540"/>
        <dbReference type="ChEBI" id="CHEBI:57945"/>
        <dbReference type="ChEBI" id="CHEBI:58452"/>
        <dbReference type="EC" id="1.1.1.262"/>
    </reaction>
</comment>
<comment type="cofactor">
    <cofactor evidence="1">
        <name>Zn(2+)</name>
        <dbReference type="ChEBI" id="CHEBI:29105"/>
    </cofactor>
    <cofactor evidence="1">
        <name>Mg(2+)</name>
        <dbReference type="ChEBI" id="CHEBI:18420"/>
    </cofactor>
    <cofactor evidence="1">
        <name>Co(2+)</name>
        <dbReference type="ChEBI" id="CHEBI:48828"/>
    </cofactor>
    <text evidence="1">Binds 1 divalent metal cation per subunit. Can use ions such as Zn(2+), Mg(2+) or Co(2+).</text>
</comment>
<comment type="pathway">
    <text evidence="1">Cofactor biosynthesis; pyridoxine 5'-phosphate biosynthesis; pyridoxine 5'-phosphate from D-erythrose 4-phosphate: step 4/5.</text>
</comment>
<comment type="subunit">
    <text evidence="1">Homodimer.</text>
</comment>
<comment type="subcellular location">
    <subcellularLocation>
        <location evidence="1">Cytoplasm</location>
    </subcellularLocation>
</comment>
<comment type="miscellaneous">
    <text evidence="1">The active site is located at the dimer interface.</text>
</comment>
<comment type="similarity">
    <text evidence="1">Belongs to the PdxA family.</text>
</comment>
<organism>
    <name type="scientific">Colwellia psychrerythraea (strain 34H / ATCC BAA-681)</name>
    <name type="common">Vibrio psychroerythus</name>
    <dbReference type="NCBI Taxonomy" id="167879"/>
    <lineage>
        <taxon>Bacteria</taxon>
        <taxon>Pseudomonadati</taxon>
        <taxon>Pseudomonadota</taxon>
        <taxon>Gammaproteobacteria</taxon>
        <taxon>Alteromonadales</taxon>
        <taxon>Colwelliaceae</taxon>
        <taxon>Colwellia</taxon>
    </lineage>
</organism>
<reference key="1">
    <citation type="journal article" date="2005" name="Proc. Natl. Acad. Sci. U.S.A.">
        <title>The psychrophilic lifestyle as revealed by the genome sequence of Colwellia psychrerythraea 34H through genomic and proteomic analyses.</title>
        <authorList>
            <person name="Methe B.A."/>
            <person name="Nelson K.E."/>
            <person name="Deming J.W."/>
            <person name="Momen B."/>
            <person name="Melamud E."/>
            <person name="Zhang X."/>
            <person name="Moult J."/>
            <person name="Madupu R."/>
            <person name="Nelson W.C."/>
            <person name="Dodson R.J."/>
            <person name="Brinkac L.M."/>
            <person name="Daugherty S.C."/>
            <person name="Durkin A.S."/>
            <person name="DeBoy R.T."/>
            <person name="Kolonay J.F."/>
            <person name="Sullivan S.A."/>
            <person name="Zhou L."/>
            <person name="Davidsen T.M."/>
            <person name="Wu M."/>
            <person name="Huston A.L."/>
            <person name="Lewis M."/>
            <person name="Weaver B."/>
            <person name="Weidman J.F."/>
            <person name="Khouri H."/>
            <person name="Utterback T.R."/>
            <person name="Feldblyum T.V."/>
            <person name="Fraser C.M."/>
        </authorList>
    </citation>
    <scope>NUCLEOTIDE SEQUENCE [LARGE SCALE GENOMIC DNA]</scope>
    <source>
        <strain>34H / ATCC BAA-681</strain>
    </source>
</reference>
<evidence type="ECO:0000255" key="1">
    <source>
        <dbReference type="HAMAP-Rule" id="MF_00536"/>
    </source>
</evidence>
<accession>Q47VJ9</accession>
<proteinExistence type="inferred from homology"/>
<feature type="chain" id="PRO_1000128239" description="4-hydroxythreonine-4-phosphate dehydrogenase">
    <location>
        <begin position="1"/>
        <end position="326"/>
    </location>
</feature>
<feature type="binding site" evidence="1">
    <location>
        <position position="134"/>
    </location>
    <ligand>
        <name>substrate</name>
    </ligand>
</feature>
<feature type="binding site" evidence="1">
    <location>
        <position position="135"/>
    </location>
    <ligand>
        <name>substrate</name>
    </ligand>
</feature>
<feature type="binding site" evidence="1">
    <location>
        <position position="164"/>
    </location>
    <ligand>
        <name>a divalent metal cation</name>
        <dbReference type="ChEBI" id="CHEBI:60240"/>
        <note>ligand shared between dimeric partners</note>
    </ligand>
</feature>
<feature type="binding site" evidence="1">
    <location>
        <position position="209"/>
    </location>
    <ligand>
        <name>a divalent metal cation</name>
        <dbReference type="ChEBI" id="CHEBI:60240"/>
        <note>ligand shared between dimeric partners</note>
    </ligand>
</feature>
<feature type="binding site" evidence="1">
    <location>
        <position position="264"/>
    </location>
    <ligand>
        <name>a divalent metal cation</name>
        <dbReference type="ChEBI" id="CHEBI:60240"/>
        <note>ligand shared between dimeric partners</note>
    </ligand>
</feature>
<feature type="binding site" evidence="1">
    <location>
        <position position="272"/>
    </location>
    <ligand>
        <name>substrate</name>
    </ligand>
</feature>
<feature type="binding site" evidence="1">
    <location>
        <position position="281"/>
    </location>
    <ligand>
        <name>substrate</name>
    </ligand>
</feature>
<feature type="binding site" evidence="1">
    <location>
        <position position="290"/>
    </location>
    <ligand>
        <name>substrate</name>
    </ligand>
</feature>
<gene>
    <name evidence="1" type="primary">pdxA</name>
    <name type="ordered locus">CPS_4525</name>
</gene>
<name>PDXA_COLP3</name>